<proteinExistence type="evidence at transcript level"/>
<dbReference type="EC" id="3.5.1.98" evidence="1"/>
<dbReference type="EC" id="3.5.1.-" evidence="1"/>
<dbReference type="EMBL" id="BC162023">
    <property type="protein sequence ID" value="AAI62023.1"/>
    <property type="molecule type" value="mRNA"/>
</dbReference>
<dbReference type="RefSeq" id="NP_001119845.2">
    <property type="nucleotide sequence ID" value="NM_001126373.2"/>
</dbReference>
<dbReference type="SMR" id="B1WC68"/>
<dbReference type="FunCoup" id="B1WC68">
    <property type="interactions" value="1062"/>
</dbReference>
<dbReference type="STRING" id="10116.ENSRNOP00000004224"/>
<dbReference type="iPTMnet" id="B1WC68"/>
<dbReference type="PhosphoSitePlus" id="B1WC68"/>
<dbReference type="PaxDb" id="10116-ENSRNOP00000004224"/>
<dbReference type="PeptideAtlas" id="B1WC68"/>
<dbReference type="Ensembl" id="ENSRNOT00000004224.7">
    <property type="protein sequence ID" value="ENSRNOP00000004224.4"/>
    <property type="gene ID" value="ENSRNOG00000003122.8"/>
</dbReference>
<dbReference type="GeneID" id="363481"/>
<dbReference type="KEGG" id="rno:363481"/>
<dbReference type="UCSC" id="RGD:1562895">
    <property type="organism name" value="rat"/>
</dbReference>
<dbReference type="AGR" id="RGD:1562895"/>
<dbReference type="CTD" id="55869"/>
<dbReference type="RGD" id="1562895">
    <property type="gene designation" value="Hdac8"/>
</dbReference>
<dbReference type="eggNOG" id="KOG1342">
    <property type="taxonomic scope" value="Eukaryota"/>
</dbReference>
<dbReference type="GeneTree" id="ENSGT00940000157843"/>
<dbReference type="HOGENOM" id="CLU_007727_7_6_1"/>
<dbReference type="InParanoid" id="B1WC68"/>
<dbReference type="PhylomeDB" id="B1WC68"/>
<dbReference type="TreeFam" id="TF106175"/>
<dbReference type="Reactome" id="R-RNO-2467813">
    <property type="pathway name" value="Separation of Sister Chromatids"/>
</dbReference>
<dbReference type="Reactome" id="R-RNO-2500257">
    <property type="pathway name" value="Resolution of Sister Chromatid Cohesion"/>
</dbReference>
<dbReference type="Reactome" id="R-RNO-350054">
    <property type="pathway name" value="Notch-HLH transcription pathway"/>
</dbReference>
<dbReference type="PRO" id="PR:B1WC68"/>
<dbReference type="Proteomes" id="UP000002494">
    <property type="component" value="Chromosome X"/>
</dbReference>
<dbReference type="Bgee" id="ENSRNOG00000003122">
    <property type="expression patterns" value="Expressed in colon and 18 other cell types or tissues"/>
</dbReference>
<dbReference type="GO" id="GO:0005694">
    <property type="term" value="C:chromosome"/>
    <property type="evidence" value="ECO:0007669"/>
    <property type="project" value="UniProtKB-SubCell"/>
</dbReference>
<dbReference type="GO" id="GO:0005737">
    <property type="term" value="C:cytoplasm"/>
    <property type="evidence" value="ECO:0007669"/>
    <property type="project" value="UniProtKB-SubCell"/>
</dbReference>
<dbReference type="GO" id="GO:0005634">
    <property type="term" value="C:nucleus"/>
    <property type="evidence" value="ECO:0007669"/>
    <property type="project" value="UniProtKB-SubCell"/>
</dbReference>
<dbReference type="GO" id="GO:0003682">
    <property type="term" value="F:chromatin binding"/>
    <property type="evidence" value="ECO:0000314"/>
    <property type="project" value="RGD"/>
</dbReference>
<dbReference type="GO" id="GO:0019213">
    <property type="term" value="F:deacetylase activity"/>
    <property type="evidence" value="ECO:0000314"/>
    <property type="project" value="RGD"/>
</dbReference>
<dbReference type="GO" id="GO:0004407">
    <property type="term" value="F:histone deacetylase activity"/>
    <property type="evidence" value="ECO:0000250"/>
    <property type="project" value="UniProtKB"/>
</dbReference>
<dbReference type="GO" id="GO:0141221">
    <property type="term" value="F:histone deacetylase activity, hydrolytic mechanism"/>
    <property type="evidence" value="ECO:0007669"/>
    <property type="project" value="UniProtKB-EC"/>
</dbReference>
<dbReference type="GO" id="GO:0160009">
    <property type="term" value="F:histone decrotonylase activity"/>
    <property type="evidence" value="ECO:0000250"/>
    <property type="project" value="UniProtKB"/>
</dbReference>
<dbReference type="GO" id="GO:0030544">
    <property type="term" value="F:Hsp70 protein binding"/>
    <property type="evidence" value="ECO:0000266"/>
    <property type="project" value="RGD"/>
</dbReference>
<dbReference type="GO" id="GO:0051879">
    <property type="term" value="F:Hsp90 protein binding"/>
    <property type="evidence" value="ECO:0000266"/>
    <property type="project" value="RGD"/>
</dbReference>
<dbReference type="GO" id="GO:0046872">
    <property type="term" value="F:metal ion binding"/>
    <property type="evidence" value="ECO:0007669"/>
    <property type="project" value="UniProtKB-KW"/>
</dbReference>
<dbReference type="GO" id="GO:0033558">
    <property type="term" value="F:protein lysine deacetylase activity"/>
    <property type="evidence" value="ECO:0000266"/>
    <property type="project" value="RGD"/>
</dbReference>
<dbReference type="GO" id="GO:1904322">
    <property type="term" value="P:cellular response to forskolin"/>
    <property type="evidence" value="ECO:0000314"/>
    <property type="project" value="RGD"/>
</dbReference>
<dbReference type="GO" id="GO:0035984">
    <property type="term" value="P:cellular response to trichostatin A"/>
    <property type="evidence" value="ECO:0000314"/>
    <property type="project" value="RGD"/>
</dbReference>
<dbReference type="GO" id="GO:0031507">
    <property type="term" value="P:heterochromatin formation"/>
    <property type="evidence" value="ECO:0000318"/>
    <property type="project" value="GO_Central"/>
</dbReference>
<dbReference type="GO" id="GO:0007064">
    <property type="term" value="P:mitotic sister chromatid cohesion"/>
    <property type="evidence" value="ECO:0000250"/>
    <property type="project" value="UniProtKB"/>
</dbReference>
<dbReference type="GO" id="GO:0010629">
    <property type="term" value="P:negative regulation of gene expression"/>
    <property type="evidence" value="ECO:0000315"/>
    <property type="project" value="RGD"/>
</dbReference>
<dbReference type="GO" id="GO:0045668">
    <property type="term" value="P:negative regulation of osteoblast differentiation"/>
    <property type="evidence" value="ECO:0000315"/>
    <property type="project" value="RGD"/>
</dbReference>
<dbReference type="GO" id="GO:0031397">
    <property type="term" value="P:negative regulation of protein ubiquitination"/>
    <property type="evidence" value="ECO:0000266"/>
    <property type="project" value="RGD"/>
</dbReference>
<dbReference type="GO" id="GO:0031647">
    <property type="term" value="P:regulation of protein stability"/>
    <property type="evidence" value="ECO:0000266"/>
    <property type="project" value="RGD"/>
</dbReference>
<dbReference type="GO" id="GO:0032204">
    <property type="term" value="P:regulation of telomere maintenance"/>
    <property type="evidence" value="ECO:0000266"/>
    <property type="project" value="RGD"/>
</dbReference>
<dbReference type="GO" id="GO:1903496">
    <property type="term" value="P:response to 11-deoxycorticosterone"/>
    <property type="evidence" value="ECO:0000314"/>
    <property type="project" value="RGD"/>
</dbReference>
<dbReference type="CDD" id="cd10000">
    <property type="entry name" value="HDAC8"/>
    <property type="match status" value="1"/>
</dbReference>
<dbReference type="FunFam" id="3.40.800.20:FF:000006">
    <property type="entry name" value="Histone deacetylase 8"/>
    <property type="match status" value="1"/>
</dbReference>
<dbReference type="Gene3D" id="3.40.800.20">
    <property type="entry name" value="Histone deacetylase domain"/>
    <property type="match status" value="1"/>
</dbReference>
<dbReference type="InterPro" id="IPR050284">
    <property type="entry name" value="HDAC_PDAC"/>
</dbReference>
<dbReference type="InterPro" id="IPR000286">
    <property type="entry name" value="His_deacetylse"/>
</dbReference>
<dbReference type="InterPro" id="IPR003084">
    <property type="entry name" value="His_deacetylse_1"/>
</dbReference>
<dbReference type="InterPro" id="IPR023801">
    <property type="entry name" value="His_deacetylse_dom"/>
</dbReference>
<dbReference type="InterPro" id="IPR037138">
    <property type="entry name" value="His_deacetylse_dom_sf"/>
</dbReference>
<dbReference type="InterPro" id="IPR023696">
    <property type="entry name" value="Ureohydrolase_dom_sf"/>
</dbReference>
<dbReference type="PANTHER" id="PTHR10625:SF14">
    <property type="entry name" value="HISTONE DEACETYLASE 8"/>
    <property type="match status" value="1"/>
</dbReference>
<dbReference type="PANTHER" id="PTHR10625">
    <property type="entry name" value="HISTONE DEACETYLASE HDAC1-RELATED"/>
    <property type="match status" value="1"/>
</dbReference>
<dbReference type="Pfam" id="PF00850">
    <property type="entry name" value="Hist_deacetyl"/>
    <property type="match status" value="1"/>
</dbReference>
<dbReference type="PIRSF" id="PIRSF037913">
    <property type="entry name" value="His_deacetylse_1"/>
    <property type="match status" value="1"/>
</dbReference>
<dbReference type="PRINTS" id="PR01270">
    <property type="entry name" value="HDASUPER"/>
</dbReference>
<dbReference type="PRINTS" id="PR01271">
    <property type="entry name" value="HISDACETLASE"/>
</dbReference>
<dbReference type="SUPFAM" id="SSF52768">
    <property type="entry name" value="Arginase/deacetylase"/>
    <property type="match status" value="1"/>
</dbReference>
<comment type="function">
    <text evidence="1">Histone deacetylase that catalyzes the deacetylation of lysine residues on the N-terminal part of the core histones (H2A, H2B, H3 and H4). Histone deacetylation gives a tag for epigenetic repression and plays an important role in transcriptional regulation, cell cycle progression and developmental events. Histone deacetylases act via the formation of large multiprotein complexes. Also involved in the deacetylation of cohesin complex protein SMC3 regulating release of cohesin complexes from chromatin. May play a role in smooth muscle cell contractility. In addition to protein deacetylase activity, also has protein-lysine deacylase activity: acts as a protein decrotonylase by mediating decrotonylation ((2E)-butenoyl) of histones.</text>
</comment>
<comment type="catalytic activity">
    <reaction evidence="1">
        <text>N(6)-acetyl-L-lysyl-[histone] + H2O = L-lysyl-[histone] + acetate</text>
        <dbReference type="Rhea" id="RHEA:58196"/>
        <dbReference type="Rhea" id="RHEA-COMP:9845"/>
        <dbReference type="Rhea" id="RHEA-COMP:11338"/>
        <dbReference type="ChEBI" id="CHEBI:15377"/>
        <dbReference type="ChEBI" id="CHEBI:29969"/>
        <dbReference type="ChEBI" id="CHEBI:30089"/>
        <dbReference type="ChEBI" id="CHEBI:61930"/>
        <dbReference type="EC" id="3.5.1.98"/>
    </reaction>
    <physiologicalReaction direction="left-to-right" evidence="1">
        <dbReference type="Rhea" id="RHEA:58197"/>
    </physiologicalReaction>
</comment>
<comment type="catalytic activity">
    <reaction evidence="1">
        <text>N(6)-acetyl-L-lysyl-[protein] + H2O = L-lysyl-[protein] + acetate</text>
        <dbReference type="Rhea" id="RHEA:58108"/>
        <dbReference type="Rhea" id="RHEA-COMP:9752"/>
        <dbReference type="Rhea" id="RHEA-COMP:10731"/>
        <dbReference type="ChEBI" id="CHEBI:15377"/>
        <dbReference type="ChEBI" id="CHEBI:29969"/>
        <dbReference type="ChEBI" id="CHEBI:30089"/>
        <dbReference type="ChEBI" id="CHEBI:61930"/>
    </reaction>
    <physiologicalReaction direction="left-to-right" evidence="1">
        <dbReference type="Rhea" id="RHEA:58109"/>
    </physiologicalReaction>
</comment>
<comment type="catalytic activity">
    <reaction evidence="1">
        <text>N(6)-(2E)-butenoyl-L-lysyl-[protein] + H2O = (2E)-2-butenoate + L-lysyl-[protein]</text>
        <dbReference type="Rhea" id="RHEA:69172"/>
        <dbReference type="Rhea" id="RHEA-COMP:9752"/>
        <dbReference type="Rhea" id="RHEA-COMP:13707"/>
        <dbReference type="ChEBI" id="CHEBI:15377"/>
        <dbReference type="ChEBI" id="CHEBI:29969"/>
        <dbReference type="ChEBI" id="CHEBI:35899"/>
        <dbReference type="ChEBI" id="CHEBI:137954"/>
    </reaction>
    <physiologicalReaction direction="left-to-right" evidence="1">
        <dbReference type="Rhea" id="RHEA:69173"/>
    </physiologicalReaction>
</comment>
<comment type="cofactor">
    <cofactor evidence="1">
        <name>a divalent metal cation</name>
        <dbReference type="ChEBI" id="CHEBI:60240"/>
    </cofactor>
    <text evidence="1">Binds 1 divalent metal cation per subunit.</text>
</comment>
<comment type="activity regulation">
    <text evidence="1">Its activity is inhibited by trichostatin A (TSA) and butyrate, 2 well known histone deacetylase inhibitors.</text>
</comment>
<comment type="subunit">
    <text evidence="1">Interacts with CBFA2T3. Interacts with phosphorylated SMG5/EST1B; this interaction protects SMG5 from ubiquitin-mediated degradation. Associates with alpha-SMA (smooth muscle alpha-actin) (By similarity).</text>
</comment>
<comment type="subcellular location">
    <subcellularLocation>
        <location evidence="1">Nucleus</location>
    </subcellularLocation>
    <subcellularLocation>
        <location evidence="1">Chromosome</location>
    </subcellularLocation>
    <subcellularLocation>
        <location evidence="1">Cytoplasm</location>
    </subcellularLocation>
    <text evidence="1">Excluded from the nucleoli. Found in the cytoplasm of cells showing smooth muscle differentiation.</text>
</comment>
<comment type="PTM">
    <text evidence="1">Phosphorylated by PKA on serine 39. Phosphorylation reduces deacetylase activity observed preferentially on histones H3 and H4 (By similarity).</text>
</comment>
<comment type="similarity">
    <text evidence="2">Belongs to the histone deacetylase family. HD type 1 subfamily.</text>
</comment>
<accession>B1WC68</accession>
<keyword id="KW-0156">Chromatin regulator</keyword>
<keyword id="KW-0158">Chromosome</keyword>
<keyword id="KW-0963">Cytoplasm</keyword>
<keyword id="KW-0378">Hydrolase</keyword>
<keyword id="KW-0479">Metal-binding</keyword>
<keyword id="KW-0539">Nucleus</keyword>
<keyword id="KW-0597">Phosphoprotein</keyword>
<keyword id="KW-1185">Reference proteome</keyword>
<keyword id="KW-0678">Repressor</keyword>
<keyword id="KW-0804">Transcription</keyword>
<keyword id="KW-0805">Transcription regulation</keyword>
<sequence length="377" mass="41754">MEIPEEPANSGHSLPPVYIYSPEYVSICDSLVKVPKRASMVHSLIEAYALHKQMRIVKPKVASMEEMATFHTDAYLQHLQKVSQEGDEDHPDSIEYGLGYDCPATEGIFDYAAAIGGGTITAAQCLIDGKCKVAINWSGGWHHAKKDEASGFCYLNDAVLGILRLRRKFDRILYVDLDLHHGDGVEDAFSFTSKVMTVSLHKFSPGFFPGTGDMSDVGLGKGRYYSVNVPIQDGIQDEKYYHICESVLKEVYQAFNPKAVVLQLGADTIAGDPMCSFNMTPVGIGKCLKYVLQWQLATLILGGGGYNLANTARCWTYLTGVILGKTLSSEIPDHEFFTAYGPDYVLEITPSCRPDRNEPHRIQQILNYIKGNLKHVV</sequence>
<protein>
    <recommendedName>
        <fullName>Histone deacetylase 8</fullName>
        <shortName>HD8</shortName>
        <ecNumber evidence="1">3.5.1.98</ecNumber>
    </recommendedName>
    <alternativeName>
        <fullName evidence="2">Protein deacetylase HDAC8</fullName>
        <ecNumber evidence="1">3.5.1.-</ecNumber>
    </alternativeName>
    <alternativeName>
        <fullName evidence="2">Protein decrotonylase HDAC8</fullName>
        <ecNumber evidence="1">3.5.1.-</ecNumber>
    </alternativeName>
</protein>
<reference key="1">
    <citation type="journal article" date="2004" name="Genome Res.">
        <title>The status, quality, and expansion of the NIH full-length cDNA project: the Mammalian Gene Collection (MGC).</title>
        <authorList>
            <consortium name="The MGC Project Team"/>
        </authorList>
    </citation>
    <scope>NUCLEOTIDE SEQUENCE [LARGE SCALE MRNA]</scope>
    <source>
        <tissue>Spleen</tissue>
    </source>
</reference>
<gene>
    <name type="primary">Hdac8</name>
</gene>
<organism>
    <name type="scientific">Rattus norvegicus</name>
    <name type="common">Rat</name>
    <dbReference type="NCBI Taxonomy" id="10116"/>
    <lineage>
        <taxon>Eukaryota</taxon>
        <taxon>Metazoa</taxon>
        <taxon>Chordata</taxon>
        <taxon>Craniata</taxon>
        <taxon>Vertebrata</taxon>
        <taxon>Euteleostomi</taxon>
        <taxon>Mammalia</taxon>
        <taxon>Eutheria</taxon>
        <taxon>Euarchontoglires</taxon>
        <taxon>Glires</taxon>
        <taxon>Rodentia</taxon>
        <taxon>Myomorpha</taxon>
        <taxon>Muroidea</taxon>
        <taxon>Muridae</taxon>
        <taxon>Murinae</taxon>
        <taxon>Rattus</taxon>
    </lineage>
</organism>
<evidence type="ECO:0000250" key="1">
    <source>
        <dbReference type="UniProtKB" id="Q9BY41"/>
    </source>
</evidence>
<evidence type="ECO:0000305" key="2"/>
<feature type="chain" id="PRO_0000389508" description="Histone deacetylase 8">
    <location>
        <begin position="1"/>
        <end position="377"/>
    </location>
</feature>
<feature type="region of interest" description="Histone deacetylase">
    <location>
        <begin position="14"/>
        <end position="324"/>
    </location>
</feature>
<feature type="active site" description="Proton acceptor" evidence="1">
    <location>
        <position position="143"/>
    </location>
</feature>
<feature type="binding site" evidence="1">
    <location>
        <position position="101"/>
    </location>
    <ligand>
        <name>substrate</name>
    </ligand>
</feature>
<feature type="binding site" evidence="1">
    <location>
        <position position="151"/>
    </location>
    <ligand>
        <name>substrate</name>
    </ligand>
</feature>
<feature type="binding site" evidence="1">
    <location>
        <position position="178"/>
    </location>
    <ligand>
        <name>a divalent metal cation</name>
        <dbReference type="ChEBI" id="CHEBI:60240"/>
    </ligand>
</feature>
<feature type="binding site" evidence="1">
    <location>
        <position position="180"/>
    </location>
    <ligand>
        <name>a divalent metal cation</name>
        <dbReference type="ChEBI" id="CHEBI:60240"/>
    </ligand>
</feature>
<feature type="binding site" evidence="1">
    <location>
        <position position="267"/>
    </location>
    <ligand>
        <name>a divalent metal cation</name>
        <dbReference type="ChEBI" id="CHEBI:60240"/>
    </ligand>
</feature>
<feature type="binding site" evidence="1">
    <location>
        <position position="306"/>
    </location>
    <ligand>
        <name>substrate</name>
    </ligand>
</feature>
<feature type="modified residue" description="Phosphoserine" evidence="1">
    <location>
        <position position="39"/>
    </location>
</feature>
<name>HDAC8_RAT</name>